<feature type="chain" id="PRO_1000131732" description="Co-chaperone protein HscB">
    <location>
        <begin position="1"/>
        <end position="171"/>
    </location>
</feature>
<feature type="domain" description="J" evidence="1">
    <location>
        <begin position="2"/>
        <end position="74"/>
    </location>
</feature>
<reference key="1">
    <citation type="journal article" date="2009" name="PLoS Genet.">
        <title>Organised genome dynamics in the Escherichia coli species results in highly diverse adaptive paths.</title>
        <authorList>
            <person name="Touchon M."/>
            <person name="Hoede C."/>
            <person name="Tenaillon O."/>
            <person name="Barbe V."/>
            <person name="Baeriswyl S."/>
            <person name="Bidet P."/>
            <person name="Bingen E."/>
            <person name="Bonacorsi S."/>
            <person name="Bouchier C."/>
            <person name="Bouvet O."/>
            <person name="Calteau A."/>
            <person name="Chiapello H."/>
            <person name="Clermont O."/>
            <person name="Cruveiller S."/>
            <person name="Danchin A."/>
            <person name="Diard M."/>
            <person name="Dossat C."/>
            <person name="Karoui M.E."/>
            <person name="Frapy E."/>
            <person name="Garry L."/>
            <person name="Ghigo J.M."/>
            <person name="Gilles A.M."/>
            <person name="Johnson J."/>
            <person name="Le Bouguenec C."/>
            <person name="Lescat M."/>
            <person name="Mangenot S."/>
            <person name="Martinez-Jehanne V."/>
            <person name="Matic I."/>
            <person name="Nassif X."/>
            <person name="Oztas S."/>
            <person name="Petit M.A."/>
            <person name="Pichon C."/>
            <person name="Rouy Z."/>
            <person name="Ruf C.S."/>
            <person name="Schneider D."/>
            <person name="Tourret J."/>
            <person name="Vacherie B."/>
            <person name="Vallenet D."/>
            <person name="Medigue C."/>
            <person name="Rocha E.P.C."/>
            <person name="Denamur E."/>
        </authorList>
    </citation>
    <scope>NUCLEOTIDE SEQUENCE [LARGE SCALE GENOMIC DNA]</scope>
    <source>
        <strain>S88 / ExPEC</strain>
    </source>
</reference>
<sequence>MDYFTLFGLPARYQLDTQALSLRFQDLQRQYHPDKFASGSQAEQLAAVQQSATINQAWQTLRHPLMRAEYLLSLHGFDLASEQHTVRDTAFLMEQLELREELDEIEQAKDEARLESFIKRVKKMFDTRHQLMVEQLDNETWDAAADTVRKLRFLDKLRSSAEQLEEKLLDF</sequence>
<dbReference type="EMBL" id="CU928161">
    <property type="protein sequence ID" value="CAR03969.1"/>
    <property type="molecule type" value="Genomic_DNA"/>
</dbReference>
<dbReference type="RefSeq" id="WP_000384413.1">
    <property type="nucleotide sequence ID" value="NC_011742.1"/>
</dbReference>
<dbReference type="SMR" id="B7MIL7"/>
<dbReference type="GeneID" id="75172640"/>
<dbReference type="KEGG" id="ecz:ECS88_2703"/>
<dbReference type="HOGENOM" id="CLU_068529_2_0_6"/>
<dbReference type="Proteomes" id="UP000000747">
    <property type="component" value="Chromosome"/>
</dbReference>
<dbReference type="GO" id="GO:1990230">
    <property type="term" value="C:iron-sulfur cluster transfer complex"/>
    <property type="evidence" value="ECO:0007669"/>
    <property type="project" value="TreeGrafter"/>
</dbReference>
<dbReference type="GO" id="GO:0001671">
    <property type="term" value="F:ATPase activator activity"/>
    <property type="evidence" value="ECO:0007669"/>
    <property type="project" value="InterPro"/>
</dbReference>
<dbReference type="GO" id="GO:0051087">
    <property type="term" value="F:protein-folding chaperone binding"/>
    <property type="evidence" value="ECO:0007669"/>
    <property type="project" value="InterPro"/>
</dbReference>
<dbReference type="GO" id="GO:0044571">
    <property type="term" value="P:[2Fe-2S] cluster assembly"/>
    <property type="evidence" value="ECO:0007669"/>
    <property type="project" value="InterPro"/>
</dbReference>
<dbReference type="GO" id="GO:0051259">
    <property type="term" value="P:protein complex oligomerization"/>
    <property type="evidence" value="ECO:0007669"/>
    <property type="project" value="InterPro"/>
</dbReference>
<dbReference type="GO" id="GO:0006457">
    <property type="term" value="P:protein folding"/>
    <property type="evidence" value="ECO:0007669"/>
    <property type="project" value="UniProtKB-UniRule"/>
</dbReference>
<dbReference type="CDD" id="cd06257">
    <property type="entry name" value="DnaJ"/>
    <property type="match status" value="1"/>
</dbReference>
<dbReference type="FunFam" id="1.10.287.110:FF:000008">
    <property type="entry name" value="Co-chaperone protein HscB"/>
    <property type="match status" value="1"/>
</dbReference>
<dbReference type="FunFam" id="1.20.1280.20:FF:000001">
    <property type="entry name" value="Co-chaperone protein HscB"/>
    <property type="match status" value="1"/>
</dbReference>
<dbReference type="Gene3D" id="1.10.287.110">
    <property type="entry name" value="DnaJ domain"/>
    <property type="match status" value="1"/>
</dbReference>
<dbReference type="Gene3D" id="1.20.1280.20">
    <property type="entry name" value="HscB, C-terminal domain"/>
    <property type="match status" value="1"/>
</dbReference>
<dbReference type="HAMAP" id="MF_00682">
    <property type="entry name" value="HscB"/>
    <property type="match status" value="1"/>
</dbReference>
<dbReference type="InterPro" id="IPR001623">
    <property type="entry name" value="DnaJ_domain"/>
</dbReference>
<dbReference type="InterPro" id="IPR004640">
    <property type="entry name" value="HscB"/>
</dbReference>
<dbReference type="InterPro" id="IPR036386">
    <property type="entry name" value="HscB_C_sf"/>
</dbReference>
<dbReference type="InterPro" id="IPR009073">
    <property type="entry name" value="HscB_oligo_C"/>
</dbReference>
<dbReference type="InterPro" id="IPR036869">
    <property type="entry name" value="J_dom_sf"/>
</dbReference>
<dbReference type="NCBIfam" id="TIGR00714">
    <property type="entry name" value="hscB"/>
    <property type="match status" value="1"/>
</dbReference>
<dbReference type="NCBIfam" id="NF003449">
    <property type="entry name" value="PRK05014.1"/>
    <property type="match status" value="1"/>
</dbReference>
<dbReference type="PANTHER" id="PTHR14021">
    <property type="entry name" value="IRON-SULFUR CLUSTER CO-CHAPERONE PROTEIN HSCB"/>
    <property type="match status" value="1"/>
</dbReference>
<dbReference type="PANTHER" id="PTHR14021:SF15">
    <property type="entry name" value="IRON-SULFUR CLUSTER CO-CHAPERONE PROTEIN HSCB"/>
    <property type="match status" value="1"/>
</dbReference>
<dbReference type="Pfam" id="PF07743">
    <property type="entry name" value="HSCB_C"/>
    <property type="match status" value="1"/>
</dbReference>
<dbReference type="SMART" id="SM00271">
    <property type="entry name" value="DnaJ"/>
    <property type="match status" value="1"/>
</dbReference>
<dbReference type="SUPFAM" id="SSF46565">
    <property type="entry name" value="Chaperone J-domain"/>
    <property type="match status" value="1"/>
</dbReference>
<dbReference type="SUPFAM" id="SSF47144">
    <property type="entry name" value="HSC20 (HSCB), C-terminal oligomerisation domain"/>
    <property type="match status" value="1"/>
</dbReference>
<dbReference type="PROSITE" id="PS50076">
    <property type="entry name" value="DNAJ_2"/>
    <property type="match status" value="1"/>
</dbReference>
<evidence type="ECO:0000255" key="1">
    <source>
        <dbReference type="HAMAP-Rule" id="MF_00682"/>
    </source>
</evidence>
<organism>
    <name type="scientific">Escherichia coli O45:K1 (strain S88 / ExPEC)</name>
    <dbReference type="NCBI Taxonomy" id="585035"/>
    <lineage>
        <taxon>Bacteria</taxon>
        <taxon>Pseudomonadati</taxon>
        <taxon>Pseudomonadota</taxon>
        <taxon>Gammaproteobacteria</taxon>
        <taxon>Enterobacterales</taxon>
        <taxon>Enterobacteriaceae</taxon>
        <taxon>Escherichia</taxon>
    </lineage>
</organism>
<gene>
    <name evidence="1" type="primary">hscB</name>
    <name type="ordered locus">ECS88_2703</name>
</gene>
<proteinExistence type="inferred from homology"/>
<name>HSCB_ECO45</name>
<comment type="function">
    <text evidence="1">Co-chaperone involved in the maturation of iron-sulfur cluster-containing proteins. Seems to help targeting proteins to be folded toward HscA.</text>
</comment>
<comment type="subunit">
    <text evidence="1">Interacts with HscA and stimulates its ATPase activity. Interacts with IscU.</text>
</comment>
<comment type="similarity">
    <text evidence="1">Belongs to the HscB family.</text>
</comment>
<protein>
    <recommendedName>
        <fullName evidence="1">Co-chaperone protein HscB</fullName>
    </recommendedName>
    <alternativeName>
        <fullName evidence="1">Hsc20</fullName>
    </alternativeName>
</protein>
<keyword id="KW-0143">Chaperone</keyword>
<keyword id="KW-1185">Reference proteome</keyword>
<accession>B7MIL7</accession>